<organism>
    <name type="scientific">Gallus gallus</name>
    <name type="common">Chicken</name>
    <dbReference type="NCBI Taxonomy" id="9031"/>
    <lineage>
        <taxon>Eukaryota</taxon>
        <taxon>Metazoa</taxon>
        <taxon>Chordata</taxon>
        <taxon>Craniata</taxon>
        <taxon>Vertebrata</taxon>
        <taxon>Euteleostomi</taxon>
        <taxon>Archelosauria</taxon>
        <taxon>Archosauria</taxon>
        <taxon>Dinosauria</taxon>
        <taxon>Saurischia</taxon>
        <taxon>Theropoda</taxon>
        <taxon>Coelurosauria</taxon>
        <taxon>Aves</taxon>
        <taxon>Neognathae</taxon>
        <taxon>Galloanserae</taxon>
        <taxon>Galliformes</taxon>
        <taxon>Phasianidae</taxon>
        <taxon>Phasianinae</taxon>
        <taxon>Gallus</taxon>
    </lineage>
</organism>
<comment type="function">
    <text evidence="1">E3 ubiquitin-protein ligase that promotes the ubiquitination of different substrates.</text>
</comment>
<comment type="catalytic activity">
    <reaction evidence="1">
        <text>S-ubiquitinyl-[E2 ubiquitin-conjugating enzyme]-L-cysteine + [acceptor protein]-L-lysine = [E2 ubiquitin-conjugating enzyme]-L-cysteine + N(6)-ubiquitinyl-[acceptor protein]-L-lysine.</text>
        <dbReference type="EC" id="2.3.2.27"/>
    </reaction>
</comment>
<comment type="pathway">
    <text evidence="1">Protein modification; protein ubiquitination.</text>
</comment>
<comment type="subcellular location">
    <subcellularLocation>
        <location evidence="1">Cytoplasm</location>
    </subcellularLocation>
</comment>
<proteinExistence type="evidence at transcript level"/>
<keyword id="KW-0963">Cytoplasm</keyword>
<keyword id="KW-0479">Metal-binding</keyword>
<keyword id="KW-1185">Reference proteome</keyword>
<keyword id="KW-0808">Transferase</keyword>
<keyword id="KW-0833">Ubl conjugation pathway</keyword>
<keyword id="KW-0862">Zinc</keyword>
<keyword id="KW-0863">Zinc-finger</keyword>
<protein>
    <recommendedName>
        <fullName>E3 ubiquitin-protein ligase RNF166</fullName>
        <ecNumber>2.3.2.27</ecNumber>
    </recommendedName>
    <alternativeName>
        <fullName>RING finger protein 166</fullName>
    </alternativeName>
    <alternativeName>
        <fullName>RING-type E3 ubiquitin transferase RNF166</fullName>
    </alternativeName>
</protein>
<feature type="chain" id="PRO_0000245591" description="E3 ubiquitin-protein ligase RNF166">
    <location>
        <begin position="1"/>
        <end position="244"/>
    </location>
</feature>
<feature type="domain" description="UIM" evidence="3">
    <location>
        <begin position="228"/>
        <end position="244"/>
    </location>
</feature>
<feature type="zinc finger region" description="RING-type" evidence="2">
    <location>
        <begin position="40"/>
        <end position="80"/>
    </location>
</feature>
<feature type="zinc finger region" description="C2HC RNF-type" evidence="4">
    <location>
        <begin position="105"/>
        <end position="124"/>
    </location>
</feature>
<feature type="region of interest" description="Disordered" evidence="5">
    <location>
        <begin position="10"/>
        <end position="30"/>
    </location>
</feature>
<feature type="compositionally biased region" description="Pro residues" evidence="5">
    <location>
        <begin position="15"/>
        <end position="28"/>
    </location>
</feature>
<feature type="binding site" evidence="4">
    <location>
        <position position="105"/>
    </location>
    <ligand>
        <name>Zn(2+)</name>
        <dbReference type="ChEBI" id="CHEBI:29105"/>
    </ligand>
</feature>
<feature type="binding site" evidence="4">
    <location>
        <position position="108"/>
    </location>
    <ligand>
        <name>Zn(2+)</name>
        <dbReference type="ChEBI" id="CHEBI:29105"/>
    </ligand>
</feature>
<feature type="binding site" evidence="4">
    <location>
        <position position="120"/>
    </location>
    <ligand>
        <name>Zn(2+)</name>
        <dbReference type="ChEBI" id="CHEBI:29105"/>
    </ligand>
</feature>
<feature type="binding site" evidence="4">
    <location>
        <position position="124"/>
    </location>
    <ligand>
        <name>Zn(2+)</name>
        <dbReference type="ChEBI" id="CHEBI:29105"/>
    </ligand>
</feature>
<name>RN166_CHICK</name>
<accession>Q5F3B2</accession>
<gene>
    <name type="primary">RNF166</name>
    <name type="ORF">RCJMB04_23k19</name>
</gene>
<dbReference type="EC" id="2.3.2.27"/>
<dbReference type="EMBL" id="AJ851738">
    <property type="protein sequence ID" value="CAH65372.1"/>
    <property type="molecule type" value="mRNA"/>
</dbReference>
<dbReference type="RefSeq" id="NP_001012953.1">
    <property type="nucleotide sequence ID" value="NM_001012935.2"/>
</dbReference>
<dbReference type="SMR" id="Q5F3B2"/>
<dbReference type="FunCoup" id="Q5F3B2">
    <property type="interactions" value="497"/>
</dbReference>
<dbReference type="STRING" id="9031.ENSGALP00000011768"/>
<dbReference type="PaxDb" id="9031-ENSGALP00000011768"/>
<dbReference type="Ensembl" id="ENSGALT00010020241.1">
    <property type="protein sequence ID" value="ENSGALP00010011770.1"/>
    <property type="gene ID" value="ENSGALG00010008476.1"/>
</dbReference>
<dbReference type="GeneID" id="425360"/>
<dbReference type="KEGG" id="gga:425360"/>
<dbReference type="CTD" id="115992"/>
<dbReference type="VEuPathDB" id="HostDB:geneid_425360"/>
<dbReference type="eggNOG" id="ENOG502RB47">
    <property type="taxonomic scope" value="Eukaryota"/>
</dbReference>
<dbReference type="GeneTree" id="ENSGT00950000182909"/>
<dbReference type="HOGENOM" id="CLU_092448_1_0_1"/>
<dbReference type="InParanoid" id="Q5F3B2"/>
<dbReference type="OMA" id="AHTFCGD"/>
<dbReference type="OrthoDB" id="6270329at2759"/>
<dbReference type="PhylomeDB" id="Q5F3B2"/>
<dbReference type="UniPathway" id="UPA00143"/>
<dbReference type="PRO" id="PR:Q5F3B2"/>
<dbReference type="Proteomes" id="UP000000539">
    <property type="component" value="Chromosome 11"/>
</dbReference>
<dbReference type="GO" id="GO:0005737">
    <property type="term" value="C:cytoplasm"/>
    <property type="evidence" value="ECO:0007669"/>
    <property type="project" value="UniProtKB-SubCell"/>
</dbReference>
<dbReference type="GO" id="GO:0061630">
    <property type="term" value="F:ubiquitin protein ligase activity"/>
    <property type="evidence" value="ECO:0000318"/>
    <property type="project" value="GO_Central"/>
</dbReference>
<dbReference type="GO" id="GO:0008270">
    <property type="term" value="F:zinc ion binding"/>
    <property type="evidence" value="ECO:0007669"/>
    <property type="project" value="UniProtKB-KW"/>
</dbReference>
<dbReference type="GO" id="GO:0000209">
    <property type="term" value="P:protein polyubiquitination"/>
    <property type="evidence" value="ECO:0000318"/>
    <property type="project" value="GO_Central"/>
</dbReference>
<dbReference type="GO" id="GO:0006511">
    <property type="term" value="P:ubiquitin-dependent protein catabolic process"/>
    <property type="evidence" value="ECO:0000318"/>
    <property type="project" value="GO_Central"/>
</dbReference>
<dbReference type="CDD" id="cd16549">
    <property type="entry name" value="RING-HC_RNF166"/>
    <property type="match status" value="1"/>
</dbReference>
<dbReference type="Gene3D" id="3.30.40.10">
    <property type="entry name" value="Zinc/RING finger domain, C3HC4 (zinc finger)"/>
    <property type="match status" value="1"/>
</dbReference>
<dbReference type="InterPro" id="IPR008598">
    <property type="entry name" value="Di19_Zn-bd"/>
</dbReference>
<dbReference type="InterPro" id="IPR051438">
    <property type="entry name" value="RNF_E3_ubiq-protein_ligase"/>
</dbReference>
<dbReference type="InterPro" id="IPR003903">
    <property type="entry name" value="UIM_dom"/>
</dbReference>
<dbReference type="InterPro" id="IPR034734">
    <property type="entry name" value="ZF_C2HC_RNF"/>
</dbReference>
<dbReference type="InterPro" id="IPR001841">
    <property type="entry name" value="Znf_RING"/>
</dbReference>
<dbReference type="InterPro" id="IPR013083">
    <property type="entry name" value="Znf_RING/FYVE/PHD"/>
</dbReference>
<dbReference type="InterPro" id="IPR017907">
    <property type="entry name" value="Znf_RING_CS"/>
</dbReference>
<dbReference type="PANTHER" id="PTHR46016:SF4">
    <property type="entry name" value="E3 UBIQUITIN-PROTEIN LIGASE RNF166"/>
    <property type="match status" value="1"/>
</dbReference>
<dbReference type="PANTHER" id="PTHR46016">
    <property type="entry name" value="ZINC FINGER, RING/FYVE/PHD-TYPE"/>
    <property type="match status" value="1"/>
</dbReference>
<dbReference type="Pfam" id="PF13923">
    <property type="entry name" value="zf-C3HC4_2"/>
    <property type="match status" value="1"/>
</dbReference>
<dbReference type="Pfam" id="PF05605">
    <property type="entry name" value="zf-Di19"/>
    <property type="match status" value="1"/>
</dbReference>
<dbReference type="Pfam" id="PF18574">
    <property type="entry name" value="zf_C2HC_14"/>
    <property type="match status" value="1"/>
</dbReference>
<dbReference type="SMART" id="SM00184">
    <property type="entry name" value="RING"/>
    <property type="match status" value="1"/>
</dbReference>
<dbReference type="SUPFAM" id="SSF57850">
    <property type="entry name" value="RING/U-box"/>
    <property type="match status" value="1"/>
</dbReference>
<dbReference type="PROSITE" id="PS50330">
    <property type="entry name" value="UIM"/>
    <property type="match status" value="1"/>
</dbReference>
<dbReference type="PROSITE" id="PS51803">
    <property type="entry name" value="ZF_C2HC_RNF"/>
    <property type="match status" value="1"/>
</dbReference>
<dbReference type="PROSITE" id="PS00518">
    <property type="entry name" value="ZF_RING_1"/>
    <property type="match status" value="1"/>
</dbReference>
<dbReference type="PROSITE" id="PS50089">
    <property type="entry name" value="ZF_RING_2"/>
    <property type="match status" value="1"/>
</dbReference>
<sequence>MFRSLLVAAAQRPQAPGPGPPRPPPPAGPAAEALEAQFSCPICLEVFHRAVGIAGCGHTFCGECLQPCLQVPSPLCPLCRMPFDPKKVEKASSVEKQLSSYKAPCRGCSKKVTLAKMRSHVSSCAKVQEQMANCPKFVPVVPTSQPIPSNIPNRSTFVCPYCGARNLDQQELVKHCMENHRNDPNKVVCPVCSAMPWGDPSYKSANFLQHLLHRHKFSYDTFVDYNIDEEAALQAALALSLSEN</sequence>
<reference key="1">
    <citation type="journal article" date="2005" name="Genome Biol.">
        <title>Full-length cDNAs from chicken bursal lymphocytes to facilitate gene function analysis.</title>
        <authorList>
            <person name="Caldwell R.B."/>
            <person name="Kierzek A.M."/>
            <person name="Arakawa H."/>
            <person name="Bezzubov Y."/>
            <person name="Zaim J."/>
            <person name="Fiedler P."/>
            <person name="Kutter S."/>
            <person name="Blagodatski A."/>
            <person name="Kostovska D."/>
            <person name="Koter M."/>
            <person name="Plachy J."/>
            <person name="Carninci P."/>
            <person name="Hayashizaki Y."/>
            <person name="Buerstedde J.-M."/>
        </authorList>
    </citation>
    <scope>NUCLEOTIDE SEQUENCE [LARGE SCALE MRNA]</scope>
    <source>
        <strain>CB</strain>
        <tissue>Bursa of Fabricius</tissue>
    </source>
</reference>
<evidence type="ECO:0000250" key="1">
    <source>
        <dbReference type="UniProtKB" id="Q96A37"/>
    </source>
</evidence>
<evidence type="ECO:0000255" key="2">
    <source>
        <dbReference type="PROSITE-ProRule" id="PRU00175"/>
    </source>
</evidence>
<evidence type="ECO:0000255" key="3">
    <source>
        <dbReference type="PROSITE-ProRule" id="PRU00213"/>
    </source>
</evidence>
<evidence type="ECO:0000255" key="4">
    <source>
        <dbReference type="PROSITE-ProRule" id="PRU01144"/>
    </source>
</evidence>
<evidence type="ECO:0000256" key="5">
    <source>
        <dbReference type="SAM" id="MobiDB-lite"/>
    </source>
</evidence>